<comment type="function">
    <molecule>Envelope glycoprotein gp160</molecule>
    <text evidence="1">Oligomerizes in the host endoplasmic reticulum into predominantly trimers. In a second time, gp160 transits in the host Golgi, where glycosylation is completed. The precursor is then proteolytically cleaved in the trans-Golgi and thereby activated by cellular furin or furin-like proteases to produce gp120 and gp41.</text>
</comment>
<comment type="function">
    <molecule>Surface protein gp120</molecule>
    <text evidence="1">Attaches the virus to the host lymphoid cell by binding to the primary receptor CD4. This interaction induces a structural rearrangement creating a high affinity binding site for a chemokine coreceptor like CXCR4 and/or CCR5. Acts as a ligand for CD209/DC-SIGN and CLEC4M/DC-SIGNR, which are respectively found on dendritic cells (DCs), and on endothelial cells of liver sinusoids and lymph node sinuses. These interactions allow capture of viral particles at mucosal surfaces by these cells and subsequent transmission to permissive cells. HIV subverts the migration properties of dendritic cells to gain access to CD4+ T-cells in lymph nodes. Virus transmission to permissive T-cells occurs either in trans (without DCs infection, through viral capture and transmission), or in cis (following DCs productive infection, through the usual CD4-gp120 interaction), thereby inducing a robust infection. In trans infection, bound virions remain infectious over days and it is proposed that they are not degraded, but protected in non-lysosomal acidic organelles within the DCs close to the cell membrane thus contributing to the viral infectious potential during DCs' migration from the periphery to the lymphoid tissues. On arrival at lymphoid tissues, intact virions recycle back to DCs' cell surface allowing virus transmission to CD4+ T-cells.</text>
</comment>
<comment type="function">
    <molecule>Transmembrane protein gp41</molecule>
    <text evidence="1">Acts as a class I viral fusion protein. Under the current model, the protein has at least 3 conformational states: pre-fusion native state, pre-hairpin intermediate state, and post-fusion hairpin state. During fusion of viral and target intracellular membranes, the coiled coil regions (heptad repeats) assume a trimer-of-hairpins structure, positioning the fusion peptide in close proximity to the C-terminal region of the ectodomain. The formation of this structure appears to drive apposition and subsequent fusion of viral and target cell membranes. Complete fusion occurs in host cell endosomes and is dynamin-dependent, however some lipid transfer might occur at the plasma membrane. The virus undergoes clathrin-dependent internalization long before endosomal fusion, thus minimizing the surface exposure of conserved viral epitopes during fusion and reducing the efficacy of inhibitors targeting these epitopes. Membranes fusion leads to delivery of the nucleocapsid into the cytoplasm.</text>
</comment>
<comment type="subunit">
    <molecule>Surface protein gp120</molecule>
    <text evidence="1">The mature envelope protein (Env) consists of a homotrimer of non-covalently associated gp120-gp41 heterodimers. The resulting complex protrudes from the virus surface as a spike. There seems to be as few as 10 spikes on the average virion. Interacts with host CD4, CCR5 and CXCR4. Gp120 also interacts with the C-type lectins CD209/DC-SIGN and CLEC4M/DC-SIGNR (collectively referred to as DC-SIGN(R)). Gp120 and gp41 interact with GalCer. Gp120 interacts with host ITGA4/ITGB7 complex; on CD4+ T-cells, this interaction results in rapid activation of integrin ITGAL/LFA-1, which facilitates efficient cell-to-cell spreading of HIV-1. Gp120 interacts with cell-associated heparan sulfate; this interaction increases virus infectivity on permissive cells and may be involved in infection of CD4- cells.</text>
</comment>
<comment type="subunit">
    <molecule>Transmembrane protein gp41</molecule>
    <text evidence="1">The mature envelope protein (Env) consists of a homotrimer of non-covalently associated gp120-gp41 heterodimers. The resulting complex protrudes from the virus surface as a spike. There seems to be as few as 10 spikes on the average virion.</text>
</comment>
<comment type="subcellular location">
    <molecule>Surface protein gp120</molecule>
    <subcellularLocation>
        <location evidence="1">Virion membrane</location>
        <topology evidence="1">Peripheral membrane protein</topology>
    </subcellularLocation>
    <subcellularLocation>
        <location evidence="1">Host cell membrane</location>
        <topology evidence="1">Peripheral membrane protein</topology>
    </subcellularLocation>
    <subcellularLocation>
        <location evidence="1">Host endosome membrane</location>
        <topology evidence="1">Single-pass type I membrane protein</topology>
    </subcellularLocation>
    <text evidence="1">The surface protein is not anchored to the viral envelope, but associates with the extravirion surface through its binding to TM. It is probably concentrated at the site of budding and incorporated into the virions possibly by contacts between the cytoplasmic tail of Env and the N-terminus of Gag.</text>
</comment>
<comment type="subcellular location">
    <molecule>Transmembrane protein gp41</molecule>
    <subcellularLocation>
        <location evidence="1">Virion membrane</location>
        <topology evidence="1">Single-pass type I membrane protein</topology>
    </subcellularLocation>
    <subcellularLocation>
        <location evidence="1">Host cell membrane</location>
        <topology evidence="1">Single-pass type I membrane protein</topology>
    </subcellularLocation>
    <subcellularLocation>
        <location evidence="1">Host endosome membrane</location>
        <topology evidence="1">Single-pass type I membrane protein</topology>
    </subcellularLocation>
    <text evidence="1">It is probably concentrated at the site of budding and incorporated into the virions possibly by contacts between the cytoplasmic tail of Env and the N-terminus of Gag.</text>
</comment>
<comment type="domain">
    <text evidence="1">Some of the most genetically diverse regions of the viral genome are present in Env. They are called variable regions 1 through 5 (V1 through V5). Coreceptor usage of gp120 is determined mainly by the primary structure of the third variable region (V3) in the outer domain of gp120. The sequence of V3 determines which coreceptor, CCR5 and/or CXCR4 (corresponding to R5/macrophage, X4/T cell and R5X4/T cell and macrophage tropism), is used to trigger the fusion potential of the Env complex, and hence which cells the virus can infect. Binding to CCR5 involves a region adjacent in addition to V3.</text>
</comment>
<comment type="domain">
    <text evidence="1">The membrane proximal external region (MPER) present in gp41 is a tryptophan-rich region recognized by the antibodies 2F5, Z13, and 4E10. MPER seems to play a role in fusion.</text>
</comment>
<comment type="domain">
    <text evidence="1">The 17 amino acids long immunosuppressive region is present in many retroviral envelope proteins. Synthetic peptides derived from this relatively conserved sequence inhibit immune function in vitro and in vivo.</text>
</comment>
<comment type="domain">
    <text evidence="1">The YXXL motif is involved in determining the exact site of viral release at the surface of infected mononuclear cells and promotes endocytosis. YXXL and di-leucine endocytosis motifs interact directly or indirectly with the clathrin adapter complexes, opperate independently, and their activities are not additive.</text>
</comment>
<comment type="domain">
    <text evidence="1">The CD4-binding region is targeted by the antibody b12.</text>
</comment>
<comment type="PTM">
    <text evidence="1">Highly glycosylated by host. The high number of glycan on the protein is reffered to as 'glycan shield' because it contributes to hide protein sequence from adaptive immune system.</text>
</comment>
<comment type="PTM">
    <text evidence="1">Palmitoylation of the transmembrane protein and of Env polyprotein (prior to its proteolytic cleavage) is essential for their association with host cell membrane lipid rafts. Palmitoylation is therefore required for envelope trafficking to classical lipid rafts, but not for viral replication.</text>
</comment>
<comment type="PTM">
    <text evidence="1">Specific enzymatic cleavages in vivo yield mature proteins. Envelope glycoproteins are synthesized as an inactive precursor that is heavily N-glycosylated and processed likely by host cell furin in the Golgi to yield the mature SU and TM proteins. The cleavage site between SU and TM requires the minimal sequence [KR]-X-[KR]-R. About 2 of the 9 disulfide bonds of gp41 are reduced by P4HB/PDI, following binding to CD4 receptor.</text>
</comment>
<comment type="miscellaneous">
    <text evidence="1">Inhibitors targeting HIV-1 viral envelope proteins are used as antiretroviral drugs. Attachment of virions to the cell surface via non-specific interactions and CD4 binding can be blocked by inhibitors that include cyanovirin-N, cyclotriazadisulfonamide analogs, PRO 2000, TNX 355 and PRO 542. In addition, BMS 806 can block CD4-induced conformational changes. Env interactions with the coreceptor molecules can be targeted by CCR5 antagonists including SCH-D, maraviroc (UK 427857) and aplaviroc (GW 873140), and the CXCR4 antagonist AMD 070. Fusion of viral and cellular membranes can be inhibited by peptides such as enfuvirtide and tifuvirtide (T 1249). Resistance to inhibitors associated with mutations in Env are observed. Most of the time, single mutations confer only a modest reduction in drug susceptibility. Combination of several mutations is usually required to develop a high-level drug resistance.</text>
</comment>
<comment type="miscellaneous">
    <text evidence="1">HIV-1 lineages are divided in three main groups, M (for Major), O (for Outlier), and N (for New, or Non-M, Non-O). The vast majority of strains found worldwide belong to the group M. Group O seems to be endemic to and largely confined to Cameroon and neighboring countries in West Central Africa, where these viruses represent a small minority of HIV-1 strains. The group N is represented by a limited number of isolates from Cameroonian persons. The group M is further subdivided in 9 clades or subtypes (A to D, F to H, J and K).</text>
</comment>
<comment type="similarity">
    <text evidence="1">Belongs to the HIV-1 env protein family.</text>
</comment>
<comment type="online information" name="hivdb">
    <link uri="https://hivdb.stanford.edu"/>
    <text>HIV drug resistance database</text>
</comment>
<comment type="online information" name="HIV drug resistance mutations">
    <link uri="https://www.iasusa.org/hiv-drug-resistance/hiv-drug-resistance-mutations/"/>
</comment>
<reference key="1">
    <citation type="journal article" date="1986" name="Cell">
        <title>Identification and characterization of conserved and variable regions in the envelope gene of HTLV-III/LAV, the retrovirus of AIDS.</title>
        <authorList>
            <person name="Starcich B.R."/>
            <person name="Hahn B.H."/>
            <person name="Shaw G.M."/>
            <person name="McNeely P.D."/>
            <person name="Modrow S."/>
            <person name="Wolf H."/>
            <person name="Parks E.S."/>
            <person name="Parks W.P."/>
            <person name="Josephs S.F."/>
            <person name="Gallo R.C."/>
            <person name="Wong-Staal F."/>
        </authorList>
    </citation>
    <scope>NUCLEOTIDE SEQUENCE [GENOMIC RNA]</scope>
</reference>
<reference key="2">
    <citation type="journal article" date="2003" name="APMIS">
        <title>Pathogens target DC-SIGN to influence their fate DC-SIGN functions as a pathogen receptor with broad specificity.</title>
        <authorList>
            <person name="Geijtenbeek T.B."/>
            <person name="van Kooyk Y."/>
        </authorList>
    </citation>
    <scope>REVIEW</scope>
</reference>
<reference key="3">
    <citation type="journal article" date="2003" name="Biochim. Biophys. Acta">
        <title>The HIV Env-mediated fusion reaction.</title>
        <authorList>
            <person name="Gallo S.A."/>
            <person name="Finnegan C.M."/>
            <person name="Viard M."/>
            <person name="Raviv Y."/>
            <person name="Dimitrov A."/>
            <person name="Rawat S.S."/>
            <person name="Puri A."/>
            <person name="Durell S."/>
            <person name="Blumenthal R."/>
        </authorList>
    </citation>
    <scope>REVIEW</scope>
</reference>
<reference key="4">
    <citation type="journal article" date="2005" name="Cell Death Differ.">
        <title>Mechanisms of apoptosis induction by the HIV-1 envelope.</title>
        <authorList>
            <person name="Perfettini J.-L."/>
            <person name="Castedo M."/>
            <person name="Roumier T."/>
            <person name="Andreau K."/>
            <person name="Nardacci R."/>
            <person name="Piacentini M."/>
            <person name="Kroemer G."/>
        </authorList>
    </citation>
    <scope>REVIEW</scope>
</reference>
<reference key="5">
    <citation type="journal article" date="2005" name="AIDS Res. Hum. Retroviruses">
        <title>V3: HIV's switch-hitter.</title>
        <authorList>
            <person name="Hartley O."/>
            <person name="Klasse P.J."/>
            <person name="Sattentau Q.J."/>
            <person name="Moore J.P."/>
        </authorList>
    </citation>
    <scope>REVIEW</scope>
</reference>
<reference key="6">
    <citation type="journal article" date="2005" name="Drugs">
        <title>Emerging drug targets for antiretroviral therapy.</title>
        <authorList>
            <person name="Reeves J.D."/>
            <person name="Piefer A.J."/>
        </authorList>
    </citation>
    <scope>REVIEW</scope>
</reference>
<reference key="7">
    <citation type="journal article" date="2006" name="EMBO J.">
        <title>HIV and the chemokine system: 10 years later.</title>
        <authorList>
            <person name="Lusso P."/>
        </authorList>
    </citation>
    <scope>REVIEW</scope>
</reference>
<gene>
    <name evidence="1" type="primary">env</name>
</gene>
<sequence>MRVMEMRKNCQHLWKWGTMLLGMLMICSAAEDLWVTVYYGVPVWKEATTTLFCASEAKAYKTEVHNVWAKHACVPTDPNPQEVLLENVTENFNMWKNNMVEQMHEDIISLWDQSLKPCVKLTPLCVTLNCTDANLNGTNVTSSSGGTMMENGEIKNCSFQVTTSRRDKTQKKYALFYKLDVVPIEKGNISPKNNTSNNTSYGNYTLIHCNSSVITQACPKVSFEPIPIHYCTPAGFAILKCNDKKFNGTGPCKNVSTVQCTHGIRPVVSTQLLLNGSLAEEEVVIRSENFTDNVKTIIVQLNASVQINCTRPNNNTRKSITKGPGRVIYATGQIIGDIRKAHCNLSRAQWNNTLKQVVTKLREQFDNKTIVFTSSSGGDPEIVLHSFNCGGEFFYCNTTQLFNSTWNSTEGSNNTGGNDTITLPCRIKQIVNMWQEVGKAMYAPPISGQIKCISNITGLLLTRDGGEDTTNTTEIFRLGGGNMRDNWRSELYKYKVVRIEPLGVAPTRAKRRVVQREKRAVGTIGAMFLGFLGAAGSTMGAGSITLTVQARHLLSGIVQQQNNLLRAIEAQQHLLQLTVWGIKQLQARVLAVERYLRDQQLLGIWGCSGKLICTTTVPWNASWSNKSLNMIWNNMTWMQWEREIDNYTGIIYNLLEESQNQQEKNEQELLELDKWANLWNWFDITQWLWYIRIFIMIVGGLVGLKIVFAVLSIVNRVRQGYSPLSFQTHLPAPRGPDRPEGIEGEGGERDRDRSGGAVNGFLTLIWDDLWTLCSFSYHRLRDLLLIVVRIVELLGRRGWEALKYWWNLLQYWSQELKNSAVSLLNTTAIAVAEGTDRIIEVAQRILRAFLHIPRRIRQGLERALL</sequence>
<organismHost>
    <name type="scientific">Homo sapiens</name>
    <name type="common">Human</name>
    <dbReference type="NCBI Taxonomy" id="9606"/>
</organismHost>
<evidence type="ECO:0000255" key="1">
    <source>
        <dbReference type="HAMAP-Rule" id="MF_04083"/>
    </source>
</evidence>
<evidence type="ECO:0000256" key="2">
    <source>
        <dbReference type="SAM" id="MobiDB-lite"/>
    </source>
</evidence>
<proteinExistence type="inferred from homology"/>
<dbReference type="EMBL" id="M17451">
    <property type="protein sequence ID" value="AAA45057.1"/>
    <property type="molecule type" value="Genomic_RNA"/>
</dbReference>
<dbReference type="BMRB" id="P04579"/>
<dbReference type="SMR" id="P04579"/>
<dbReference type="GlyCosmos" id="P04579">
    <property type="glycosylation" value="32 sites, No reported glycans"/>
</dbReference>
<dbReference type="Reactome" id="R-HSA-5621480">
    <property type="pathway name" value="Dectin-2 family"/>
</dbReference>
<dbReference type="Proteomes" id="UP000007699">
    <property type="component" value="Segment"/>
</dbReference>
<dbReference type="GO" id="GO:0044175">
    <property type="term" value="C:host cell endosome membrane"/>
    <property type="evidence" value="ECO:0007669"/>
    <property type="project" value="UniProtKB-SubCell"/>
</dbReference>
<dbReference type="GO" id="GO:0020002">
    <property type="term" value="C:host cell plasma membrane"/>
    <property type="evidence" value="ECO:0007669"/>
    <property type="project" value="UniProtKB-SubCell"/>
</dbReference>
<dbReference type="GO" id="GO:0016020">
    <property type="term" value="C:membrane"/>
    <property type="evidence" value="ECO:0007669"/>
    <property type="project" value="UniProtKB-UniRule"/>
</dbReference>
<dbReference type="GO" id="GO:0019031">
    <property type="term" value="C:viral envelope"/>
    <property type="evidence" value="ECO:0007669"/>
    <property type="project" value="UniProtKB-KW"/>
</dbReference>
<dbReference type="GO" id="GO:0055036">
    <property type="term" value="C:virion membrane"/>
    <property type="evidence" value="ECO:0007669"/>
    <property type="project" value="UniProtKB-SubCell"/>
</dbReference>
<dbReference type="GO" id="GO:0005198">
    <property type="term" value="F:structural molecule activity"/>
    <property type="evidence" value="ECO:0007669"/>
    <property type="project" value="UniProtKB-UniRule"/>
</dbReference>
<dbReference type="GO" id="GO:0075512">
    <property type="term" value="P:clathrin-dependent endocytosis of virus by host cell"/>
    <property type="evidence" value="ECO:0007669"/>
    <property type="project" value="UniProtKB-UniRule"/>
</dbReference>
<dbReference type="GO" id="GO:0039654">
    <property type="term" value="P:fusion of virus membrane with host endosome membrane"/>
    <property type="evidence" value="ECO:0007669"/>
    <property type="project" value="UniProtKB-UniRule"/>
</dbReference>
<dbReference type="GO" id="GO:0019064">
    <property type="term" value="P:fusion of virus membrane with host plasma membrane"/>
    <property type="evidence" value="ECO:0007669"/>
    <property type="project" value="UniProtKB-UniRule"/>
</dbReference>
<dbReference type="GO" id="GO:1903908">
    <property type="term" value="P:positive regulation of plasma membrane raft polarization"/>
    <property type="evidence" value="ECO:0007669"/>
    <property type="project" value="UniProtKB-UniRule"/>
</dbReference>
<dbReference type="GO" id="GO:1903911">
    <property type="term" value="P:positive regulation of receptor clustering"/>
    <property type="evidence" value="ECO:0007669"/>
    <property type="project" value="UniProtKB-UniRule"/>
</dbReference>
<dbReference type="GO" id="GO:0019082">
    <property type="term" value="P:viral protein processing"/>
    <property type="evidence" value="ECO:0007669"/>
    <property type="project" value="UniProtKB-UniRule"/>
</dbReference>
<dbReference type="GO" id="GO:0019062">
    <property type="term" value="P:virion attachment to host cell"/>
    <property type="evidence" value="ECO:0007669"/>
    <property type="project" value="UniProtKB-UniRule"/>
</dbReference>
<dbReference type="CDD" id="cd09909">
    <property type="entry name" value="HIV-1-like_HR1-HR2"/>
    <property type="match status" value="1"/>
</dbReference>
<dbReference type="FunFam" id="1.10.287.210:FF:000001">
    <property type="entry name" value="Envelope glycoprotein gp160"/>
    <property type="match status" value="1"/>
</dbReference>
<dbReference type="FunFam" id="1.20.5.490:FF:000001">
    <property type="entry name" value="Envelope glycoprotein gp160"/>
    <property type="match status" value="1"/>
</dbReference>
<dbReference type="FunFam" id="2.170.40.20:FF:000001">
    <property type="entry name" value="Envelope glycoprotein gp160"/>
    <property type="match status" value="1"/>
</dbReference>
<dbReference type="FunFam" id="2.170.40.20:FF:000003">
    <property type="entry name" value="Envelope glycoprotein gp160"/>
    <property type="match status" value="1"/>
</dbReference>
<dbReference type="Gene3D" id="1.10.287.210">
    <property type="match status" value="1"/>
</dbReference>
<dbReference type="Gene3D" id="2.170.40.20">
    <property type="entry name" value="Human immunodeficiency virus 1, Gp160, envelope glycoprotein"/>
    <property type="match status" value="2"/>
</dbReference>
<dbReference type="Gene3D" id="1.20.5.490">
    <property type="entry name" value="Single helix bin"/>
    <property type="match status" value="1"/>
</dbReference>
<dbReference type="HAMAP" id="MF_04083">
    <property type="entry name" value="HIV_ENV"/>
    <property type="match status" value="1"/>
</dbReference>
<dbReference type="InterPro" id="IPR036377">
    <property type="entry name" value="Gp120_core_sf"/>
</dbReference>
<dbReference type="InterPro" id="IPR037527">
    <property type="entry name" value="Gp160"/>
</dbReference>
<dbReference type="InterPro" id="IPR000328">
    <property type="entry name" value="GP41-like"/>
</dbReference>
<dbReference type="InterPro" id="IPR000777">
    <property type="entry name" value="HIV1_Gp120"/>
</dbReference>
<dbReference type="Pfam" id="PF00516">
    <property type="entry name" value="GP120"/>
    <property type="match status" value="1"/>
</dbReference>
<dbReference type="Pfam" id="PF00517">
    <property type="entry name" value="GP41"/>
    <property type="match status" value="1"/>
</dbReference>
<dbReference type="SUPFAM" id="SSF56502">
    <property type="entry name" value="gp120 core"/>
    <property type="match status" value="2"/>
</dbReference>
<dbReference type="SUPFAM" id="SSF58069">
    <property type="entry name" value="Virus ectodomain"/>
    <property type="match status" value="1"/>
</dbReference>
<name>ENV_HV1RH</name>
<keyword id="KW-0014">AIDS</keyword>
<keyword id="KW-0053">Apoptosis</keyword>
<keyword id="KW-1165">Clathrin-mediated endocytosis of virus by host</keyword>
<keyword id="KW-0165">Cleavage on pair of basic residues</keyword>
<keyword id="KW-0175">Coiled coil</keyword>
<keyword id="KW-1015">Disulfide bond</keyword>
<keyword id="KW-1170">Fusion of virus membrane with host endosomal membrane</keyword>
<keyword id="KW-1168">Fusion of virus membrane with host membrane</keyword>
<keyword id="KW-0325">Glycoprotein</keyword>
<keyword id="KW-1032">Host cell membrane</keyword>
<keyword id="KW-1039">Host endosome</keyword>
<keyword id="KW-1043">Host membrane</keyword>
<keyword id="KW-0945">Host-virus interaction</keyword>
<keyword id="KW-0449">Lipoprotein</keyword>
<keyword id="KW-0472">Membrane</keyword>
<keyword id="KW-0564">Palmitate</keyword>
<keyword id="KW-1185">Reference proteome</keyword>
<keyword id="KW-0732">Signal</keyword>
<keyword id="KW-0812">Transmembrane</keyword>
<keyword id="KW-1133">Transmembrane helix</keyword>
<keyword id="KW-1161">Viral attachment to host cell</keyword>
<keyword id="KW-0261">Viral envelope protein</keyword>
<keyword id="KW-0899">Viral immunoevasion</keyword>
<keyword id="KW-1162">Viral penetration into host cytoplasm</keyword>
<keyword id="KW-0946">Virion</keyword>
<keyword id="KW-1164">Virus endocytosis by host</keyword>
<keyword id="KW-1160">Virus entry into host cell</keyword>
<organism>
    <name type="scientific">Human immunodeficiency virus type 1 group M subtype B (isolate RF/HAT3)</name>
    <name type="common">HIV-1</name>
    <dbReference type="NCBI Taxonomy" id="11701"/>
    <lineage>
        <taxon>Viruses</taxon>
        <taxon>Riboviria</taxon>
        <taxon>Pararnavirae</taxon>
        <taxon>Artverviricota</taxon>
        <taxon>Revtraviricetes</taxon>
        <taxon>Ortervirales</taxon>
        <taxon>Retroviridae</taxon>
        <taxon>Orthoretrovirinae</taxon>
        <taxon>Lentivirus</taxon>
        <taxon>Human immunodeficiency virus type 1</taxon>
    </lineage>
</organism>
<feature type="signal peptide" evidence="1">
    <location>
        <begin position="1"/>
        <end position="31"/>
    </location>
</feature>
<feature type="chain" id="PRO_0000441245" description="Envelope glycoprotein gp160" evidence="1">
    <location>
        <begin position="32"/>
        <end position="865"/>
    </location>
</feature>
<feature type="chain" id="PRO_0000441246" description="Surface protein gp120" evidence="1">
    <location>
        <begin position="32"/>
        <end position="519"/>
    </location>
</feature>
<feature type="chain" id="PRO_0000038418" description="Transmembrane protein gp41" evidence="1">
    <location>
        <begin position="520"/>
        <end position="865"/>
    </location>
</feature>
<feature type="topological domain" description="Extracellular" evidence="1">
    <location>
        <begin position="32"/>
        <end position="693"/>
    </location>
</feature>
<feature type="transmembrane region" description="Helical" evidence="1">
    <location>
        <begin position="694"/>
        <end position="714"/>
    </location>
</feature>
<feature type="topological domain" description="Cytoplasmic" evidence="1">
    <location>
        <begin position="715"/>
        <end position="865"/>
    </location>
</feature>
<feature type="region of interest" description="V1" evidence="1">
    <location>
        <begin position="130"/>
        <end position="156"/>
    </location>
</feature>
<feature type="region of interest" description="V2" evidence="1">
    <location>
        <begin position="157"/>
        <end position="209"/>
    </location>
</feature>
<feature type="region of interest" description="V3" evidence="1">
    <location>
        <begin position="309"/>
        <end position="342"/>
    </location>
</feature>
<feature type="region of interest" description="CD4-binding loop" evidence="1">
    <location>
        <begin position="375"/>
        <end position="385"/>
    </location>
</feature>
<feature type="region of interest" description="V4" evidence="1">
    <location>
        <begin position="396"/>
        <end position="425"/>
    </location>
</feature>
<feature type="region of interest" description="V5">
    <location>
        <begin position="468"/>
        <end position="479"/>
    </location>
</feature>
<feature type="region of interest" description="V5" evidence="1">
    <location>
        <begin position="470"/>
        <end position="479"/>
    </location>
</feature>
<feature type="region of interest" description="Fusion peptide" evidence="1">
    <location>
        <begin position="520"/>
        <end position="541"/>
    </location>
</feature>
<feature type="region of interest" description="Immunosuppression" evidence="1">
    <location>
        <begin position="583"/>
        <end position="601"/>
    </location>
</feature>
<feature type="region of interest" description="MPER; binding to GalCer" evidence="1">
    <location>
        <begin position="671"/>
        <end position="692"/>
    </location>
</feature>
<feature type="region of interest" description="Disordered" evidence="2">
    <location>
        <begin position="728"/>
        <end position="754"/>
    </location>
</feature>
<feature type="coiled-coil region" evidence="1">
    <location>
        <begin position="642"/>
        <end position="676"/>
    </location>
</feature>
<feature type="short sequence motif" description="YXXL motif; contains endocytosis signal" evidence="1">
    <location>
        <begin position="721"/>
        <end position="724"/>
    </location>
</feature>
<feature type="short sequence motif" description="Di-leucine internalization motif" evidence="1">
    <location>
        <begin position="864"/>
        <end position="865"/>
    </location>
</feature>
<feature type="compositionally biased region" description="Basic and acidic residues" evidence="2">
    <location>
        <begin position="735"/>
        <end position="754"/>
    </location>
</feature>
<feature type="site" description="Cleavage; by host furin" evidence="1">
    <location>
        <begin position="519"/>
        <end position="520"/>
    </location>
</feature>
<feature type="lipid moiety-binding region" description="S-palmitoyl cysteine; by host" evidence="1">
    <location>
        <position position="773"/>
    </location>
</feature>
<feature type="glycosylation site" description="N-linked (GlcNAc...) asparagine; by host" evidence="1">
    <location>
        <position position="87"/>
    </location>
</feature>
<feature type="glycosylation site" description="N-linked (GlcNAc...) asparagine; by host" evidence="1">
    <location>
        <position position="129"/>
    </location>
</feature>
<feature type="glycosylation site" description="N-linked (GlcNAc...) asparagine; by host" evidence="1">
    <location>
        <position position="136"/>
    </location>
</feature>
<feature type="glycosylation site" description="N-linked (GlcNAc...) asparagine; by host" evidence="1">
    <location>
        <position position="139"/>
    </location>
</feature>
<feature type="glycosylation site" description="N-linked (GlcNAc...) asparagine; by host" evidence="1">
    <location>
        <position position="156"/>
    </location>
</feature>
<feature type="glycosylation site" description="N-linked (GlcNAc...) asparagine; by host" evidence="1">
    <location>
        <position position="193"/>
    </location>
</feature>
<feature type="glycosylation site" description="N-linked (GlcNAc...) asparagine; by host" evidence="1">
    <location>
        <position position="194"/>
    </location>
</feature>
<feature type="glycosylation site" description="N-linked (GlcNAc...) asparagine; by host" evidence="1">
    <location>
        <position position="197"/>
    </location>
</feature>
<feature type="glycosylation site" description="N-linked (GlcNAc...) asparagine; by host" evidence="1">
    <location>
        <position position="198"/>
    </location>
</feature>
<feature type="glycosylation site" description="N-linked (GlcNAc...) asparagine; by host" evidence="1">
    <location>
        <position position="203"/>
    </location>
</feature>
<feature type="glycosylation site" description="N-linked (GlcNAc...) asparagine; by host" evidence="1">
    <location>
        <position position="210"/>
    </location>
</feature>
<feature type="glycosylation site" description="N-linked (GlcNAc...) asparagine; by host" evidence="1">
    <location>
        <position position="247"/>
    </location>
</feature>
<feature type="glycosylation site" description="N-linked (GlcNAc...) asparagine; by host" evidence="1">
    <location>
        <position position="254"/>
    </location>
</feature>
<feature type="glycosylation site" description="N-linked (GlcNAc...) asparagine; by host" evidence="1">
    <location>
        <position position="275"/>
    </location>
</feature>
<feature type="glycosylation site" description="N-linked (GlcNAc...) asparagine; by host" evidence="1">
    <location>
        <position position="289"/>
    </location>
</feature>
<feature type="glycosylation site" description="N-linked (GlcNAc...) asparagine; by host" evidence="1">
    <location>
        <position position="302"/>
    </location>
</feature>
<feature type="glycosylation site" description="N-linked (GlcNAc...) asparagine; by host" evidence="1">
    <location>
        <position position="308"/>
    </location>
</feature>
<feature type="glycosylation site" description="N-linked (GlcNAc...) asparagine; by host" evidence="1">
    <location>
        <position position="314"/>
    </location>
</feature>
<feature type="glycosylation site" description="N-linked (GlcNAc...) asparagine; by host" evidence="1">
    <location>
        <position position="344"/>
    </location>
</feature>
<feature type="glycosylation site" description="N-linked (GlcNAc...) asparagine; by host" evidence="1">
    <location>
        <position position="351"/>
    </location>
</feature>
<feature type="glycosylation site" description="N-linked (GlcNAc...) asparagine; by host" evidence="1">
    <location>
        <position position="367"/>
    </location>
</feature>
<feature type="glycosylation site" description="N-linked (GlcNAc...) asparagine; by host" evidence="1">
    <location>
        <position position="397"/>
    </location>
</feature>
<feature type="glycosylation site" description="N-linked (GlcNAc...) asparagine; by host" evidence="1">
    <location>
        <position position="403"/>
    </location>
</feature>
<feature type="glycosylation site" description="N-linked (GlcNAc...) asparagine; by host" evidence="1">
    <location>
        <position position="407"/>
    </location>
</feature>
<feature type="glycosylation site" description="N-linked (GlcNAc...) asparagine; by host" evidence="1">
    <location>
        <position position="413"/>
    </location>
</feature>
<feature type="glycosylation site" description="N-linked (GlcNAc...) asparagine; by host" evidence="1">
    <location>
        <position position="418"/>
    </location>
</feature>
<feature type="glycosylation site" description="N-linked (GlcNAc...) asparagine; by host" evidence="1">
    <location>
        <position position="455"/>
    </location>
</feature>
<feature type="glycosylation site" description="N-linked (GlcNAc...) asparagine; by host" evidence="1">
    <location>
        <position position="471"/>
    </location>
</feature>
<feature type="glycosylation site" description="N-linked (GlcNAc...) asparagine; by host" evidence="1">
    <location>
        <position position="620"/>
    </location>
</feature>
<feature type="glycosylation site" description="N-linked (GlcNAc...) asparagine; by host" evidence="1">
    <location>
        <position position="625"/>
    </location>
</feature>
<feature type="glycosylation site" description="N-linked (GlcNAc...) asparagine; by host" evidence="1">
    <location>
        <position position="634"/>
    </location>
</feature>
<feature type="glycosylation site" description="N-linked (GlcNAc...) asparagine; by host" evidence="1">
    <location>
        <position position="646"/>
    </location>
</feature>
<feature type="disulfide bond" evidence="1">
    <location>
        <begin position="53"/>
        <end position="73"/>
    </location>
</feature>
<feature type="disulfide bond" evidence="1">
    <location>
        <begin position="118"/>
        <end position="218"/>
    </location>
</feature>
<feature type="disulfide bond" evidence="1">
    <location>
        <begin position="125"/>
        <end position="209"/>
    </location>
</feature>
<feature type="disulfide bond" evidence="1">
    <location>
        <begin position="130"/>
        <end position="157"/>
    </location>
</feature>
<feature type="disulfide bond" evidence="1">
    <location>
        <begin position="231"/>
        <end position="260"/>
    </location>
</feature>
<feature type="disulfide bond" evidence="1">
    <location>
        <begin position="241"/>
        <end position="252"/>
    </location>
</feature>
<feature type="disulfide bond" evidence="1">
    <location>
        <begin position="309"/>
        <end position="343"/>
    </location>
</feature>
<feature type="disulfide bond" evidence="1">
    <location>
        <begin position="389"/>
        <end position="452"/>
    </location>
</feature>
<feature type="disulfide bond" evidence="1">
    <location>
        <begin position="396"/>
        <end position="425"/>
    </location>
</feature>
<feature type="disulfide bond" evidence="1">
    <location>
        <begin position="607"/>
        <end position="613"/>
    </location>
</feature>
<accession>P04579</accession>
<protein>
    <recommendedName>
        <fullName evidence="1">Envelope glycoprotein gp160</fullName>
    </recommendedName>
    <alternativeName>
        <fullName evidence="1">Env polyprotein</fullName>
    </alternativeName>
    <component>
        <recommendedName>
            <fullName evidence="1">Surface protein gp120</fullName>
            <shortName evidence="1">SU</shortName>
        </recommendedName>
        <alternativeName>
            <fullName evidence="1">Glycoprotein 120</fullName>
            <shortName evidence="1">gp120</shortName>
        </alternativeName>
    </component>
    <component>
        <recommendedName>
            <fullName evidence="1">Transmembrane protein gp41</fullName>
            <shortName evidence="1">TM</shortName>
        </recommendedName>
        <alternativeName>
            <fullName evidence="1">Glycoprotein 41</fullName>
            <shortName evidence="1">gp41</shortName>
        </alternativeName>
    </component>
</protein>